<accession>B1ZUH7</accession>
<sequence length="367" mass="39819">MTLSSLGWDDFFAGAFQPFASENFLPARVALEHKHACVLLSARGEITATCTGRLLHETATRAALPAVGDWVAVRLRPESLASGAGVALVGDIHAVLPRRTAFTRRAVGDADAEQVLATNVDTVFLVTGLDRDFNLRRIERYLAVARASEAQPVVVLNKSDLHPDARGAEAEVRRITRTAPVVTLSAARGDGIAALAPWLVPGATVALLGSSGAGKSTLINRLLGKQRQDTGPLSHAMNKGRHTTTHRELLALPGGALVIDTPGLRELQLWGVDESAVAETFPEVAALAAECRFPDCTHQREPGCAVRAALDDGTLDPTRWASYEKLQREQAYAARRVDPVLARAERDRWKKIYQGQRARERIEGRWE</sequence>
<feature type="chain" id="PRO_1000216046" description="Small ribosomal subunit biogenesis GTPase RsgA">
    <location>
        <begin position="1"/>
        <end position="367"/>
    </location>
</feature>
<feature type="domain" description="CP-type G" evidence="2">
    <location>
        <begin position="112"/>
        <end position="267"/>
    </location>
</feature>
<feature type="binding site" evidence="1">
    <location>
        <begin position="157"/>
        <end position="160"/>
    </location>
    <ligand>
        <name>GTP</name>
        <dbReference type="ChEBI" id="CHEBI:37565"/>
    </ligand>
</feature>
<feature type="binding site" evidence="1">
    <location>
        <begin position="209"/>
        <end position="217"/>
    </location>
    <ligand>
        <name>GTP</name>
        <dbReference type="ChEBI" id="CHEBI:37565"/>
    </ligand>
</feature>
<feature type="binding site" evidence="1">
    <location>
        <position position="291"/>
    </location>
    <ligand>
        <name>Zn(2+)</name>
        <dbReference type="ChEBI" id="CHEBI:29105"/>
    </ligand>
</feature>
<feature type="binding site" evidence="1">
    <location>
        <position position="296"/>
    </location>
    <ligand>
        <name>Zn(2+)</name>
        <dbReference type="ChEBI" id="CHEBI:29105"/>
    </ligand>
</feature>
<feature type="binding site" evidence="1">
    <location>
        <position position="298"/>
    </location>
    <ligand>
        <name>Zn(2+)</name>
        <dbReference type="ChEBI" id="CHEBI:29105"/>
    </ligand>
</feature>
<feature type="binding site" evidence="1">
    <location>
        <position position="304"/>
    </location>
    <ligand>
        <name>Zn(2+)</name>
        <dbReference type="ChEBI" id="CHEBI:29105"/>
    </ligand>
</feature>
<protein>
    <recommendedName>
        <fullName evidence="1">Small ribosomal subunit biogenesis GTPase RsgA</fullName>
        <ecNumber evidence="1">3.6.1.-</ecNumber>
    </recommendedName>
</protein>
<comment type="function">
    <text evidence="1">One of several proteins that assist in the late maturation steps of the functional core of the 30S ribosomal subunit. Helps release RbfA from mature subunits. May play a role in the assembly of ribosomal proteins into the subunit. Circularly permuted GTPase that catalyzes slow GTP hydrolysis, GTPase activity is stimulated by the 30S ribosomal subunit.</text>
</comment>
<comment type="cofactor">
    <cofactor evidence="1">
        <name>Zn(2+)</name>
        <dbReference type="ChEBI" id="CHEBI:29105"/>
    </cofactor>
    <text evidence="1">Binds 1 zinc ion per subunit.</text>
</comment>
<comment type="subunit">
    <text evidence="1">Monomer. Associates with 30S ribosomal subunit, binds 16S rRNA.</text>
</comment>
<comment type="subcellular location">
    <subcellularLocation>
        <location evidence="1">Cytoplasm</location>
    </subcellularLocation>
</comment>
<comment type="similarity">
    <text evidence="1">Belongs to the TRAFAC class YlqF/YawG GTPase family. RsgA subfamily.</text>
</comment>
<keyword id="KW-0963">Cytoplasm</keyword>
<keyword id="KW-0342">GTP-binding</keyword>
<keyword id="KW-0378">Hydrolase</keyword>
<keyword id="KW-0479">Metal-binding</keyword>
<keyword id="KW-0547">Nucleotide-binding</keyword>
<keyword id="KW-1185">Reference proteome</keyword>
<keyword id="KW-0690">Ribosome biogenesis</keyword>
<keyword id="KW-0694">RNA-binding</keyword>
<keyword id="KW-0699">rRNA-binding</keyword>
<keyword id="KW-0862">Zinc</keyword>
<evidence type="ECO:0000255" key="1">
    <source>
        <dbReference type="HAMAP-Rule" id="MF_01820"/>
    </source>
</evidence>
<evidence type="ECO:0000255" key="2">
    <source>
        <dbReference type="PROSITE-ProRule" id="PRU01058"/>
    </source>
</evidence>
<reference key="1">
    <citation type="journal article" date="2011" name="J. Bacteriol.">
        <title>Genome sequence of the verrucomicrobium Opitutus terrae PB90-1, an abundant inhabitant of rice paddy soil ecosystems.</title>
        <authorList>
            <person name="van Passel M.W."/>
            <person name="Kant R."/>
            <person name="Palva A."/>
            <person name="Copeland A."/>
            <person name="Lucas S."/>
            <person name="Lapidus A."/>
            <person name="Glavina del Rio T."/>
            <person name="Pitluck S."/>
            <person name="Goltsman E."/>
            <person name="Clum A."/>
            <person name="Sun H."/>
            <person name="Schmutz J."/>
            <person name="Larimer F.W."/>
            <person name="Land M.L."/>
            <person name="Hauser L."/>
            <person name="Kyrpides N."/>
            <person name="Mikhailova N."/>
            <person name="Richardson P.P."/>
            <person name="Janssen P.H."/>
            <person name="de Vos W.M."/>
            <person name="Smidt H."/>
        </authorList>
    </citation>
    <scope>NUCLEOTIDE SEQUENCE [LARGE SCALE GENOMIC DNA]</scope>
    <source>
        <strain>DSM 11246 / JCM 15787 / PB90-1</strain>
    </source>
</reference>
<proteinExistence type="inferred from homology"/>
<organism>
    <name type="scientific">Opitutus terrae (strain DSM 11246 / JCM 15787 / PB90-1)</name>
    <dbReference type="NCBI Taxonomy" id="452637"/>
    <lineage>
        <taxon>Bacteria</taxon>
        <taxon>Pseudomonadati</taxon>
        <taxon>Verrucomicrobiota</taxon>
        <taxon>Opitutia</taxon>
        <taxon>Opitutales</taxon>
        <taxon>Opitutaceae</taxon>
        <taxon>Opitutus</taxon>
    </lineage>
</organism>
<gene>
    <name evidence="1" type="primary">rsgA</name>
    <name type="ordered locus">Oter_0731</name>
</gene>
<name>RSGA_OPITP</name>
<dbReference type="EC" id="3.6.1.-" evidence="1"/>
<dbReference type="EMBL" id="CP001032">
    <property type="protein sequence ID" value="ACB74020.1"/>
    <property type="molecule type" value="Genomic_DNA"/>
</dbReference>
<dbReference type="RefSeq" id="WP_012373558.1">
    <property type="nucleotide sequence ID" value="NC_010571.1"/>
</dbReference>
<dbReference type="SMR" id="B1ZUH7"/>
<dbReference type="STRING" id="452637.Oter_0731"/>
<dbReference type="KEGG" id="ote:Oter_0731"/>
<dbReference type="eggNOG" id="COG1162">
    <property type="taxonomic scope" value="Bacteria"/>
</dbReference>
<dbReference type="HOGENOM" id="CLU_033617_0_1_0"/>
<dbReference type="OrthoDB" id="9809485at2"/>
<dbReference type="Proteomes" id="UP000007013">
    <property type="component" value="Chromosome"/>
</dbReference>
<dbReference type="GO" id="GO:0005737">
    <property type="term" value="C:cytoplasm"/>
    <property type="evidence" value="ECO:0007669"/>
    <property type="project" value="UniProtKB-SubCell"/>
</dbReference>
<dbReference type="GO" id="GO:0005525">
    <property type="term" value="F:GTP binding"/>
    <property type="evidence" value="ECO:0007669"/>
    <property type="project" value="UniProtKB-UniRule"/>
</dbReference>
<dbReference type="GO" id="GO:0003924">
    <property type="term" value="F:GTPase activity"/>
    <property type="evidence" value="ECO:0007669"/>
    <property type="project" value="UniProtKB-UniRule"/>
</dbReference>
<dbReference type="GO" id="GO:0046872">
    <property type="term" value="F:metal ion binding"/>
    <property type="evidence" value="ECO:0007669"/>
    <property type="project" value="UniProtKB-KW"/>
</dbReference>
<dbReference type="GO" id="GO:0019843">
    <property type="term" value="F:rRNA binding"/>
    <property type="evidence" value="ECO:0007669"/>
    <property type="project" value="UniProtKB-KW"/>
</dbReference>
<dbReference type="GO" id="GO:0042274">
    <property type="term" value="P:ribosomal small subunit biogenesis"/>
    <property type="evidence" value="ECO:0007669"/>
    <property type="project" value="UniProtKB-UniRule"/>
</dbReference>
<dbReference type="CDD" id="cd01854">
    <property type="entry name" value="YjeQ_EngC"/>
    <property type="match status" value="1"/>
</dbReference>
<dbReference type="Gene3D" id="3.40.50.300">
    <property type="entry name" value="P-loop containing nucleotide triphosphate hydrolases"/>
    <property type="match status" value="1"/>
</dbReference>
<dbReference type="Gene3D" id="1.10.40.50">
    <property type="entry name" value="Probable gtpase engc, domain 3"/>
    <property type="match status" value="1"/>
</dbReference>
<dbReference type="HAMAP" id="MF_01820">
    <property type="entry name" value="GTPase_RsgA"/>
    <property type="match status" value="1"/>
</dbReference>
<dbReference type="InterPro" id="IPR030378">
    <property type="entry name" value="G_CP_dom"/>
</dbReference>
<dbReference type="InterPro" id="IPR027417">
    <property type="entry name" value="P-loop_NTPase"/>
</dbReference>
<dbReference type="InterPro" id="IPR004881">
    <property type="entry name" value="Ribosome_biogen_GTPase_RsgA"/>
</dbReference>
<dbReference type="InterPro" id="IPR010914">
    <property type="entry name" value="RsgA_GTPase_dom"/>
</dbReference>
<dbReference type="NCBIfam" id="TIGR00157">
    <property type="entry name" value="ribosome small subunit-dependent GTPase A"/>
    <property type="match status" value="1"/>
</dbReference>
<dbReference type="PANTHER" id="PTHR32120">
    <property type="entry name" value="SMALL RIBOSOMAL SUBUNIT BIOGENESIS GTPASE RSGA"/>
    <property type="match status" value="1"/>
</dbReference>
<dbReference type="PANTHER" id="PTHR32120:SF10">
    <property type="entry name" value="SMALL RIBOSOMAL SUBUNIT BIOGENESIS GTPASE RSGA"/>
    <property type="match status" value="1"/>
</dbReference>
<dbReference type="Pfam" id="PF03193">
    <property type="entry name" value="RsgA_GTPase"/>
    <property type="match status" value="1"/>
</dbReference>
<dbReference type="SUPFAM" id="SSF52540">
    <property type="entry name" value="P-loop containing nucleoside triphosphate hydrolases"/>
    <property type="match status" value="1"/>
</dbReference>
<dbReference type="PROSITE" id="PS50936">
    <property type="entry name" value="ENGC_GTPASE"/>
    <property type="match status" value="1"/>
</dbReference>
<dbReference type="PROSITE" id="PS51721">
    <property type="entry name" value="G_CP"/>
    <property type="match status" value="1"/>
</dbReference>